<proteinExistence type="inferred from homology"/>
<keyword id="KW-0328">Glycosyltransferase</keyword>
<keyword id="KW-0808">Transferase</keyword>
<evidence type="ECO:0000250" key="1">
    <source>
        <dbReference type="UniProtKB" id="P50389"/>
    </source>
</evidence>
<evidence type="ECO:0000255" key="2">
    <source>
        <dbReference type="HAMAP-Rule" id="MF_01627"/>
    </source>
</evidence>
<protein>
    <recommendedName>
        <fullName evidence="2">Purine nucleoside phosphorylase DeoD-type</fullName>
        <shortName evidence="2">PNP</shortName>
        <ecNumber evidence="2">2.4.2.1</ecNumber>
    </recommendedName>
</protein>
<name>DEOD_STRPB</name>
<gene>
    <name evidence="2" type="primary">deoD</name>
    <name type="ordered locus">MGAS2096_Spy0771</name>
</gene>
<feature type="chain" id="PRO_1000186228" description="Purine nucleoside phosphorylase DeoD-type">
    <location>
        <begin position="1"/>
        <end position="237"/>
    </location>
</feature>
<feature type="active site" description="Proton donor" evidence="2">
    <location>
        <position position="204"/>
    </location>
</feature>
<feature type="binding site" evidence="1">
    <location>
        <position position="4"/>
    </location>
    <ligand>
        <name>a purine D-ribonucleoside</name>
        <dbReference type="ChEBI" id="CHEBI:142355"/>
        <note>ligand shared between dimeric partners</note>
    </ligand>
</feature>
<feature type="binding site" description="in other chain" evidence="1">
    <location>
        <position position="20"/>
    </location>
    <ligand>
        <name>phosphate</name>
        <dbReference type="ChEBI" id="CHEBI:43474"/>
        <note>ligand shared between dimeric partners</note>
    </ligand>
</feature>
<feature type="binding site" description="in other chain" evidence="1">
    <location>
        <position position="24"/>
    </location>
    <ligand>
        <name>phosphate</name>
        <dbReference type="ChEBI" id="CHEBI:43474"/>
        <note>ligand shared between dimeric partners</note>
    </ligand>
</feature>
<feature type="binding site" evidence="1">
    <location>
        <position position="43"/>
    </location>
    <ligand>
        <name>phosphate</name>
        <dbReference type="ChEBI" id="CHEBI:43474"/>
        <note>ligand shared between dimeric partners</note>
    </ligand>
</feature>
<feature type="binding site" description="in other chain" evidence="1">
    <location>
        <begin position="87"/>
        <end position="90"/>
    </location>
    <ligand>
        <name>phosphate</name>
        <dbReference type="ChEBI" id="CHEBI:43474"/>
        <note>ligand shared between dimeric partners</note>
    </ligand>
</feature>
<feature type="binding site" description="in other chain" evidence="1">
    <location>
        <begin position="179"/>
        <end position="181"/>
    </location>
    <ligand>
        <name>a purine D-ribonucleoside</name>
        <dbReference type="ChEBI" id="CHEBI:142355"/>
        <note>ligand shared between dimeric partners</note>
    </ligand>
</feature>
<feature type="binding site" description="in other chain" evidence="1">
    <location>
        <begin position="203"/>
        <end position="204"/>
    </location>
    <ligand>
        <name>a purine D-ribonucleoside</name>
        <dbReference type="ChEBI" id="CHEBI:142355"/>
        <note>ligand shared between dimeric partners</note>
    </ligand>
</feature>
<feature type="site" description="Important for catalytic activity" evidence="2">
    <location>
        <position position="218"/>
    </location>
</feature>
<accession>Q1JC85</accession>
<comment type="function">
    <text evidence="2">Catalyzes the reversible phosphorolytic breakdown of the N-glycosidic bond in the beta-(deoxy)ribonucleoside molecules, with the formation of the corresponding free purine bases and pentose-1-phosphate.</text>
</comment>
<comment type="catalytic activity">
    <reaction evidence="2">
        <text>a purine D-ribonucleoside + phosphate = a purine nucleobase + alpha-D-ribose 1-phosphate</text>
        <dbReference type="Rhea" id="RHEA:19805"/>
        <dbReference type="ChEBI" id="CHEBI:26386"/>
        <dbReference type="ChEBI" id="CHEBI:43474"/>
        <dbReference type="ChEBI" id="CHEBI:57720"/>
        <dbReference type="ChEBI" id="CHEBI:142355"/>
        <dbReference type="EC" id="2.4.2.1"/>
    </reaction>
</comment>
<comment type="catalytic activity">
    <reaction evidence="2">
        <text>a purine 2'-deoxy-D-ribonucleoside + phosphate = a purine nucleobase + 2-deoxy-alpha-D-ribose 1-phosphate</text>
        <dbReference type="Rhea" id="RHEA:36431"/>
        <dbReference type="ChEBI" id="CHEBI:26386"/>
        <dbReference type="ChEBI" id="CHEBI:43474"/>
        <dbReference type="ChEBI" id="CHEBI:57259"/>
        <dbReference type="ChEBI" id="CHEBI:142361"/>
        <dbReference type="EC" id="2.4.2.1"/>
    </reaction>
</comment>
<comment type="subunit">
    <text evidence="2">Homohexamer; trimer of homodimers.</text>
</comment>
<comment type="similarity">
    <text evidence="2">Belongs to the PNP/UDP phosphorylase family.</text>
</comment>
<organism>
    <name type="scientific">Streptococcus pyogenes serotype M12 (strain MGAS2096)</name>
    <dbReference type="NCBI Taxonomy" id="370553"/>
    <lineage>
        <taxon>Bacteria</taxon>
        <taxon>Bacillati</taxon>
        <taxon>Bacillota</taxon>
        <taxon>Bacilli</taxon>
        <taxon>Lactobacillales</taxon>
        <taxon>Streptococcaceae</taxon>
        <taxon>Streptococcus</taxon>
    </lineage>
</organism>
<dbReference type="EC" id="2.4.2.1" evidence="2"/>
<dbReference type="EMBL" id="CP000261">
    <property type="protein sequence ID" value="ABF35823.1"/>
    <property type="molecule type" value="Genomic_DNA"/>
</dbReference>
<dbReference type="SMR" id="Q1JC85"/>
<dbReference type="KEGG" id="spj:MGAS2096_Spy0771"/>
<dbReference type="HOGENOM" id="CLU_068457_2_0_9"/>
<dbReference type="GO" id="GO:0005829">
    <property type="term" value="C:cytosol"/>
    <property type="evidence" value="ECO:0007669"/>
    <property type="project" value="TreeGrafter"/>
</dbReference>
<dbReference type="GO" id="GO:0004731">
    <property type="term" value="F:purine-nucleoside phosphorylase activity"/>
    <property type="evidence" value="ECO:0007669"/>
    <property type="project" value="UniProtKB-UniRule"/>
</dbReference>
<dbReference type="GO" id="GO:0006152">
    <property type="term" value="P:purine nucleoside catabolic process"/>
    <property type="evidence" value="ECO:0007669"/>
    <property type="project" value="TreeGrafter"/>
</dbReference>
<dbReference type="CDD" id="cd09006">
    <property type="entry name" value="PNP_EcPNPI-like"/>
    <property type="match status" value="1"/>
</dbReference>
<dbReference type="Gene3D" id="3.40.50.1580">
    <property type="entry name" value="Nucleoside phosphorylase domain"/>
    <property type="match status" value="1"/>
</dbReference>
<dbReference type="HAMAP" id="MF_01627">
    <property type="entry name" value="Pur_nucleosid_phosp"/>
    <property type="match status" value="1"/>
</dbReference>
<dbReference type="InterPro" id="IPR004402">
    <property type="entry name" value="DeoD-type"/>
</dbReference>
<dbReference type="InterPro" id="IPR018016">
    <property type="entry name" value="Nucleoside_phosphorylase_CS"/>
</dbReference>
<dbReference type="InterPro" id="IPR000845">
    <property type="entry name" value="Nucleoside_phosphorylase_d"/>
</dbReference>
<dbReference type="InterPro" id="IPR035994">
    <property type="entry name" value="Nucleoside_phosphorylase_sf"/>
</dbReference>
<dbReference type="NCBIfam" id="TIGR00107">
    <property type="entry name" value="deoD"/>
    <property type="match status" value="1"/>
</dbReference>
<dbReference type="NCBIfam" id="NF004489">
    <property type="entry name" value="PRK05819.1"/>
    <property type="match status" value="1"/>
</dbReference>
<dbReference type="PANTHER" id="PTHR43691:SF11">
    <property type="entry name" value="FI09636P-RELATED"/>
    <property type="match status" value="1"/>
</dbReference>
<dbReference type="PANTHER" id="PTHR43691">
    <property type="entry name" value="URIDINE PHOSPHORYLASE"/>
    <property type="match status" value="1"/>
</dbReference>
<dbReference type="Pfam" id="PF01048">
    <property type="entry name" value="PNP_UDP_1"/>
    <property type="match status" value="1"/>
</dbReference>
<dbReference type="SUPFAM" id="SSF53167">
    <property type="entry name" value="Purine and uridine phosphorylases"/>
    <property type="match status" value="1"/>
</dbReference>
<dbReference type="PROSITE" id="PS01232">
    <property type="entry name" value="PNP_UDP_1"/>
    <property type="match status" value="1"/>
</dbReference>
<reference key="1">
    <citation type="journal article" date="2006" name="Proc. Natl. Acad. Sci. U.S.A.">
        <title>Molecular genetic anatomy of inter- and intraserotype variation in the human bacterial pathogen group A Streptococcus.</title>
        <authorList>
            <person name="Beres S.B."/>
            <person name="Richter E.W."/>
            <person name="Nagiec M.J."/>
            <person name="Sumby P."/>
            <person name="Porcella S.F."/>
            <person name="DeLeo F.R."/>
            <person name="Musser J.M."/>
        </authorList>
    </citation>
    <scope>NUCLEOTIDE SEQUENCE [LARGE SCALE GENOMIC DNA]</scope>
    <source>
        <strain>MGAS2096</strain>
    </source>
</reference>
<sequence>MSIHISAKKGDIADKILLPGDPLRAKFIAENFLEDAVCFNEVRNMFGYTGTYKGHRVSVMGTGMGMPSISIYARELIVDYGVKTLIRVGTAGAIDPEVHVRELVLAQAAATNSNIIRNDFPEFDFPQIADFGLLDKAYHIAREMGVTTHVGNVLSSDVFYTNMPERNMALGKLGVKAIEMEAAALYYLAAQHHVKALGIMTISDNLNDPTEDTTAEERQTTFTDMMKVGLETLIAND</sequence>